<accession>Q0HT68</accession>
<protein>
    <recommendedName>
        <fullName evidence="1">1-deoxy-D-xylulose 5-phosphate reductoisomerase</fullName>
        <shortName evidence="1">DXP reductoisomerase</shortName>
        <ecNumber evidence="1">1.1.1.267</ecNumber>
    </recommendedName>
    <alternativeName>
        <fullName evidence="1">1-deoxyxylulose-5-phosphate reductoisomerase</fullName>
    </alternativeName>
    <alternativeName>
        <fullName evidence="1">2-C-methyl-D-erythritol 4-phosphate synthase</fullName>
    </alternativeName>
</protein>
<gene>
    <name evidence="1" type="primary">dxr</name>
    <name type="ordered locus">Shewmr7_2702</name>
</gene>
<proteinExistence type="inferred from homology"/>
<sequence>MQNMVILGATGSIGASTLSVISANPDAYRVYALVANASVDKMLALCVTHRPQVAHMVDSQAALALQAKLPPELNIQVSSGEDELIALVTATEVDTVMAAIVGAAGLVPTLAAVKAGKRVLLANKEALVMSGELFIEATKASGATLLPVDSEHNAIFQCLPEEVQANLGRCDLAASGISHILLTGSGGPFLTAELASLAAMTPAQACKHPNWSMGPKISVDSATMMNKGLEFIEARWLFNTQNDQLKVVIHPQSVIHSMVQYRDGSVIAQMGNPDMRTPIAHCMSYPQRISSGVEPLDFFKVGQLSFCEPDFNRFPCLALAIAACAQGQEATTVLNAANEIAVEAFLQGQIGFTHIAKVNEACLSSVPKRAMTSIDDIIALDAQTRIYAREQLAKLA</sequence>
<dbReference type="EC" id="1.1.1.267" evidence="1"/>
<dbReference type="EMBL" id="CP000444">
    <property type="protein sequence ID" value="ABI43687.1"/>
    <property type="molecule type" value="Genomic_DNA"/>
</dbReference>
<dbReference type="SMR" id="Q0HT68"/>
<dbReference type="KEGG" id="shm:Shewmr7_2702"/>
<dbReference type="HOGENOM" id="CLU_035714_4_0_6"/>
<dbReference type="UniPathway" id="UPA00056">
    <property type="reaction ID" value="UER00092"/>
</dbReference>
<dbReference type="GO" id="GO:0030604">
    <property type="term" value="F:1-deoxy-D-xylulose-5-phosphate reductoisomerase activity"/>
    <property type="evidence" value="ECO:0007669"/>
    <property type="project" value="UniProtKB-UniRule"/>
</dbReference>
<dbReference type="GO" id="GO:0030145">
    <property type="term" value="F:manganese ion binding"/>
    <property type="evidence" value="ECO:0007669"/>
    <property type="project" value="TreeGrafter"/>
</dbReference>
<dbReference type="GO" id="GO:0070402">
    <property type="term" value="F:NADPH binding"/>
    <property type="evidence" value="ECO:0007669"/>
    <property type="project" value="InterPro"/>
</dbReference>
<dbReference type="GO" id="GO:0051484">
    <property type="term" value="P:isopentenyl diphosphate biosynthetic process, methylerythritol 4-phosphate pathway involved in terpenoid biosynthetic process"/>
    <property type="evidence" value="ECO:0007669"/>
    <property type="project" value="TreeGrafter"/>
</dbReference>
<dbReference type="FunFam" id="1.10.1740.10:FF:000004">
    <property type="entry name" value="1-deoxy-D-xylulose 5-phosphate reductoisomerase"/>
    <property type="match status" value="1"/>
</dbReference>
<dbReference type="FunFam" id="3.40.50.720:FF:000045">
    <property type="entry name" value="1-deoxy-D-xylulose 5-phosphate reductoisomerase"/>
    <property type="match status" value="1"/>
</dbReference>
<dbReference type="Gene3D" id="1.10.1740.10">
    <property type="match status" value="1"/>
</dbReference>
<dbReference type="Gene3D" id="3.40.50.720">
    <property type="entry name" value="NAD(P)-binding Rossmann-like Domain"/>
    <property type="match status" value="1"/>
</dbReference>
<dbReference type="HAMAP" id="MF_00183">
    <property type="entry name" value="DXP_reductoisom"/>
    <property type="match status" value="1"/>
</dbReference>
<dbReference type="InterPro" id="IPR003821">
    <property type="entry name" value="DXP_reductoisomerase"/>
</dbReference>
<dbReference type="InterPro" id="IPR013644">
    <property type="entry name" value="DXP_reductoisomerase_C"/>
</dbReference>
<dbReference type="InterPro" id="IPR013512">
    <property type="entry name" value="DXP_reductoisomerase_N"/>
</dbReference>
<dbReference type="InterPro" id="IPR026877">
    <property type="entry name" value="DXPR_C"/>
</dbReference>
<dbReference type="InterPro" id="IPR036169">
    <property type="entry name" value="DXPR_C_sf"/>
</dbReference>
<dbReference type="InterPro" id="IPR036291">
    <property type="entry name" value="NAD(P)-bd_dom_sf"/>
</dbReference>
<dbReference type="NCBIfam" id="TIGR00243">
    <property type="entry name" value="Dxr"/>
    <property type="match status" value="1"/>
</dbReference>
<dbReference type="NCBIfam" id="NF003938">
    <property type="entry name" value="PRK05447.1-1"/>
    <property type="match status" value="1"/>
</dbReference>
<dbReference type="NCBIfam" id="NF009114">
    <property type="entry name" value="PRK12464.1"/>
    <property type="match status" value="1"/>
</dbReference>
<dbReference type="PANTHER" id="PTHR30525">
    <property type="entry name" value="1-DEOXY-D-XYLULOSE 5-PHOSPHATE REDUCTOISOMERASE"/>
    <property type="match status" value="1"/>
</dbReference>
<dbReference type="PANTHER" id="PTHR30525:SF0">
    <property type="entry name" value="1-DEOXY-D-XYLULOSE 5-PHOSPHATE REDUCTOISOMERASE, CHLOROPLASTIC"/>
    <property type="match status" value="1"/>
</dbReference>
<dbReference type="Pfam" id="PF08436">
    <property type="entry name" value="DXP_redisom_C"/>
    <property type="match status" value="1"/>
</dbReference>
<dbReference type="Pfam" id="PF02670">
    <property type="entry name" value="DXP_reductoisom"/>
    <property type="match status" value="1"/>
</dbReference>
<dbReference type="Pfam" id="PF13288">
    <property type="entry name" value="DXPR_C"/>
    <property type="match status" value="1"/>
</dbReference>
<dbReference type="PIRSF" id="PIRSF006205">
    <property type="entry name" value="Dxp_reductismrs"/>
    <property type="match status" value="1"/>
</dbReference>
<dbReference type="SUPFAM" id="SSF69055">
    <property type="entry name" value="1-deoxy-D-xylulose-5-phosphate reductoisomerase, C-terminal domain"/>
    <property type="match status" value="1"/>
</dbReference>
<dbReference type="SUPFAM" id="SSF55347">
    <property type="entry name" value="Glyceraldehyde-3-phosphate dehydrogenase-like, C-terminal domain"/>
    <property type="match status" value="1"/>
</dbReference>
<dbReference type="SUPFAM" id="SSF51735">
    <property type="entry name" value="NAD(P)-binding Rossmann-fold domains"/>
    <property type="match status" value="1"/>
</dbReference>
<feature type="chain" id="PRO_1000020312" description="1-deoxy-D-xylulose 5-phosphate reductoisomerase">
    <location>
        <begin position="1"/>
        <end position="396"/>
    </location>
</feature>
<feature type="binding site" evidence="1">
    <location>
        <position position="10"/>
    </location>
    <ligand>
        <name>NADPH</name>
        <dbReference type="ChEBI" id="CHEBI:57783"/>
    </ligand>
</feature>
<feature type="binding site" evidence="1">
    <location>
        <position position="11"/>
    </location>
    <ligand>
        <name>NADPH</name>
        <dbReference type="ChEBI" id="CHEBI:57783"/>
    </ligand>
</feature>
<feature type="binding site" evidence="1">
    <location>
        <position position="12"/>
    </location>
    <ligand>
        <name>NADPH</name>
        <dbReference type="ChEBI" id="CHEBI:57783"/>
    </ligand>
</feature>
<feature type="binding site" evidence="1">
    <location>
        <position position="13"/>
    </location>
    <ligand>
        <name>NADPH</name>
        <dbReference type="ChEBI" id="CHEBI:57783"/>
    </ligand>
</feature>
<feature type="binding site" evidence="1">
    <location>
        <position position="123"/>
    </location>
    <ligand>
        <name>NADPH</name>
        <dbReference type="ChEBI" id="CHEBI:57783"/>
    </ligand>
</feature>
<feature type="binding site" evidence="1">
    <location>
        <position position="124"/>
    </location>
    <ligand>
        <name>1-deoxy-D-xylulose 5-phosphate</name>
        <dbReference type="ChEBI" id="CHEBI:57792"/>
    </ligand>
</feature>
<feature type="binding site" evidence="1">
    <location>
        <position position="125"/>
    </location>
    <ligand>
        <name>NADPH</name>
        <dbReference type="ChEBI" id="CHEBI:57783"/>
    </ligand>
</feature>
<feature type="binding site" evidence="1">
    <location>
        <position position="149"/>
    </location>
    <ligand>
        <name>Mn(2+)</name>
        <dbReference type="ChEBI" id="CHEBI:29035"/>
    </ligand>
</feature>
<feature type="binding site" evidence="1">
    <location>
        <position position="150"/>
    </location>
    <ligand>
        <name>1-deoxy-D-xylulose 5-phosphate</name>
        <dbReference type="ChEBI" id="CHEBI:57792"/>
    </ligand>
</feature>
<feature type="binding site" evidence="1">
    <location>
        <position position="151"/>
    </location>
    <ligand>
        <name>1-deoxy-D-xylulose 5-phosphate</name>
        <dbReference type="ChEBI" id="CHEBI:57792"/>
    </ligand>
</feature>
<feature type="binding site" evidence="1">
    <location>
        <position position="151"/>
    </location>
    <ligand>
        <name>Mn(2+)</name>
        <dbReference type="ChEBI" id="CHEBI:29035"/>
    </ligand>
</feature>
<feature type="binding site" evidence="1">
    <location>
        <position position="185"/>
    </location>
    <ligand>
        <name>1-deoxy-D-xylulose 5-phosphate</name>
        <dbReference type="ChEBI" id="CHEBI:57792"/>
    </ligand>
</feature>
<feature type="binding site" evidence="1">
    <location>
        <position position="208"/>
    </location>
    <ligand>
        <name>1-deoxy-D-xylulose 5-phosphate</name>
        <dbReference type="ChEBI" id="CHEBI:57792"/>
    </ligand>
</feature>
<feature type="binding site" evidence="1">
    <location>
        <position position="214"/>
    </location>
    <ligand>
        <name>NADPH</name>
        <dbReference type="ChEBI" id="CHEBI:57783"/>
    </ligand>
</feature>
<feature type="binding site" evidence="1">
    <location>
        <position position="221"/>
    </location>
    <ligand>
        <name>1-deoxy-D-xylulose 5-phosphate</name>
        <dbReference type="ChEBI" id="CHEBI:57792"/>
    </ligand>
</feature>
<feature type="binding site" evidence="1">
    <location>
        <position position="226"/>
    </location>
    <ligand>
        <name>1-deoxy-D-xylulose 5-phosphate</name>
        <dbReference type="ChEBI" id="CHEBI:57792"/>
    </ligand>
</feature>
<feature type="binding site" evidence="1">
    <location>
        <position position="227"/>
    </location>
    <ligand>
        <name>1-deoxy-D-xylulose 5-phosphate</name>
        <dbReference type="ChEBI" id="CHEBI:57792"/>
    </ligand>
</feature>
<feature type="binding site" evidence="1">
    <location>
        <position position="230"/>
    </location>
    <ligand>
        <name>1-deoxy-D-xylulose 5-phosphate</name>
        <dbReference type="ChEBI" id="CHEBI:57792"/>
    </ligand>
</feature>
<feature type="binding site" evidence="1">
    <location>
        <position position="230"/>
    </location>
    <ligand>
        <name>Mn(2+)</name>
        <dbReference type="ChEBI" id="CHEBI:29035"/>
    </ligand>
</feature>
<comment type="function">
    <text evidence="1">Catalyzes the NADPH-dependent rearrangement and reduction of 1-deoxy-D-xylulose-5-phosphate (DXP) to 2-C-methyl-D-erythritol 4-phosphate (MEP).</text>
</comment>
<comment type="catalytic activity">
    <reaction evidence="1">
        <text>2-C-methyl-D-erythritol 4-phosphate + NADP(+) = 1-deoxy-D-xylulose 5-phosphate + NADPH + H(+)</text>
        <dbReference type="Rhea" id="RHEA:13717"/>
        <dbReference type="ChEBI" id="CHEBI:15378"/>
        <dbReference type="ChEBI" id="CHEBI:57783"/>
        <dbReference type="ChEBI" id="CHEBI:57792"/>
        <dbReference type="ChEBI" id="CHEBI:58262"/>
        <dbReference type="ChEBI" id="CHEBI:58349"/>
        <dbReference type="EC" id="1.1.1.267"/>
    </reaction>
    <physiologicalReaction direction="right-to-left" evidence="1">
        <dbReference type="Rhea" id="RHEA:13719"/>
    </physiologicalReaction>
</comment>
<comment type="cofactor">
    <cofactor evidence="1">
        <name>Mg(2+)</name>
        <dbReference type="ChEBI" id="CHEBI:18420"/>
    </cofactor>
    <cofactor evidence="1">
        <name>Mn(2+)</name>
        <dbReference type="ChEBI" id="CHEBI:29035"/>
    </cofactor>
</comment>
<comment type="pathway">
    <text evidence="1">Isoprenoid biosynthesis; isopentenyl diphosphate biosynthesis via DXP pathway; isopentenyl diphosphate from 1-deoxy-D-xylulose 5-phosphate: step 1/6.</text>
</comment>
<comment type="similarity">
    <text evidence="1">Belongs to the DXR family.</text>
</comment>
<organism>
    <name type="scientific">Shewanella sp. (strain MR-7)</name>
    <dbReference type="NCBI Taxonomy" id="60481"/>
    <lineage>
        <taxon>Bacteria</taxon>
        <taxon>Pseudomonadati</taxon>
        <taxon>Pseudomonadota</taxon>
        <taxon>Gammaproteobacteria</taxon>
        <taxon>Alteromonadales</taxon>
        <taxon>Shewanellaceae</taxon>
        <taxon>Shewanella</taxon>
    </lineage>
</organism>
<reference key="1">
    <citation type="submission" date="2006-08" db="EMBL/GenBank/DDBJ databases">
        <title>Complete sequence of chromosome 1 of Shewanella sp. MR-7.</title>
        <authorList>
            <person name="Copeland A."/>
            <person name="Lucas S."/>
            <person name="Lapidus A."/>
            <person name="Barry K."/>
            <person name="Detter J.C."/>
            <person name="Glavina del Rio T."/>
            <person name="Hammon N."/>
            <person name="Israni S."/>
            <person name="Dalin E."/>
            <person name="Tice H."/>
            <person name="Pitluck S."/>
            <person name="Kiss H."/>
            <person name="Brettin T."/>
            <person name="Bruce D."/>
            <person name="Han C."/>
            <person name="Tapia R."/>
            <person name="Gilna P."/>
            <person name="Schmutz J."/>
            <person name="Larimer F."/>
            <person name="Land M."/>
            <person name="Hauser L."/>
            <person name="Kyrpides N."/>
            <person name="Mikhailova N."/>
            <person name="Nealson K."/>
            <person name="Konstantinidis K."/>
            <person name="Klappenbach J."/>
            <person name="Tiedje J."/>
            <person name="Richardson P."/>
        </authorList>
    </citation>
    <scope>NUCLEOTIDE SEQUENCE [LARGE SCALE GENOMIC DNA]</scope>
    <source>
        <strain>MR-7</strain>
    </source>
</reference>
<name>DXR_SHESR</name>
<evidence type="ECO:0000255" key="1">
    <source>
        <dbReference type="HAMAP-Rule" id="MF_00183"/>
    </source>
</evidence>
<keyword id="KW-0414">Isoprene biosynthesis</keyword>
<keyword id="KW-0464">Manganese</keyword>
<keyword id="KW-0479">Metal-binding</keyword>
<keyword id="KW-0521">NADP</keyword>
<keyword id="KW-0560">Oxidoreductase</keyword>